<organism>
    <name type="scientific">Actinobacillus pleuropneumoniae serotype 3 (strain JL03)</name>
    <dbReference type="NCBI Taxonomy" id="434271"/>
    <lineage>
        <taxon>Bacteria</taxon>
        <taxon>Pseudomonadati</taxon>
        <taxon>Pseudomonadota</taxon>
        <taxon>Gammaproteobacteria</taxon>
        <taxon>Pasteurellales</taxon>
        <taxon>Pasteurellaceae</taxon>
        <taxon>Actinobacillus</taxon>
    </lineage>
</organism>
<name>RPOZ_ACTPJ</name>
<comment type="function">
    <text evidence="1">Promotes RNA polymerase assembly. Latches the N- and C-terminal regions of the beta' subunit thereby facilitating its interaction with the beta and alpha subunits.</text>
</comment>
<comment type="catalytic activity">
    <reaction evidence="1">
        <text>RNA(n) + a ribonucleoside 5'-triphosphate = RNA(n+1) + diphosphate</text>
        <dbReference type="Rhea" id="RHEA:21248"/>
        <dbReference type="Rhea" id="RHEA-COMP:14527"/>
        <dbReference type="Rhea" id="RHEA-COMP:17342"/>
        <dbReference type="ChEBI" id="CHEBI:33019"/>
        <dbReference type="ChEBI" id="CHEBI:61557"/>
        <dbReference type="ChEBI" id="CHEBI:140395"/>
        <dbReference type="EC" id="2.7.7.6"/>
    </reaction>
</comment>
<comment type="subunit">
    <text evidence="1">The RNAP catalytic core consists of 2 alpha, 1 beta, 1 beta' and 1 omega subunit. When a sigma factor is associated with the core the holoenzyme is formed, which can initiate transcription.</text>
</comment>
<comment type="similarity">
    <text evidence="1">Belongs to the RNA polymerase subunit omega family.</text>
</comment>
<gene>
    <name evidence="1" type="primary">rpoZ</name>
    <name type="ordered locus">APJL_1862</name>
</gene>
<accession>B0BSZ8</accession>
<keyword id="KW-0240">DNA-directed RNA polymerase</keyword>
<keyword id="KW-0548">Nucleotidyltransferase</keyword>
<keyword id="KW-0804">Transcription</keyword>
<keyword id="KW-0808">Transferase</keyword>
<feature type="chain" id="PRO_1000121182" description="DNA-directed RNA polymerase subunit omega">
    <location>
        <begin position="1"/>
        <end position="93"/>
    </location>
</feature>
<dbReference type="EC" id="2.7.7.6" evidence="1"/>
<dbReference type="EMBL" id="CP000687">
    <property type="protein sequence ID" value="ABY70412.1"/>
    <property type="molecule type" value="Genomic_DNA"/>
</dbReference>
<dbReference type="RefSeq" id="WP_012263402.1">
    <property type="nucleotide sequence ID" value="NC_010278.1"/>
</dbReference>
<dbReference type="SMR" id="B0BSZ8"/>
<dbReference type="KEGG" id="apj:APJL_1862"/>
<dbReference type="HOGENOM" id="CLU_125406_5_3_6"/>
<dbReference type="Proteomes" id="UP000008547">
    <property type="component" value="Chromosome"/>
</dbReference>
<dbReference type="GO" id="GO:0000428">
    <property type="term" value="C:DNA-directed RNA polymerase complex"/>
    <property type="evidence" value="ECO:0007669"/>
    <property type="project" value="UniProtKB-KW"/>
</dbReference>
<dbReference type="GO" id="GO:0003677">
    <property type="term" value="F:DNA binding"/>
    <property type="evidence" value="ECO:0007669"/>
    <property type="project" value="UniProtKB-UniRule"/>
</dbReference>
<dbReference type="GO" id="GO:0003899">
    <property type="term" value="F:DNA-directed RNA polymerase activity"/>
    <property type="evidence" value="ECO:0007669"/>
    <property type="project" value="UniProtKB-UniRule"/>
</dbReference>
<dbReference type="GO" id="GO:0006351">
    <property type="term" value="P:DNA-templated transcription"/>
    <property type="evidence" value="ECO:0007669"/>
    <property type="project" value="UniProtKB-UniRule"/>
</dbReference>
<dbReference type="Gene3D" id="3.90.940.10">
    <property type="match status" value="1"/>
</dbReference>
<dbReference type="HAMAP" id="MF_00366">
    <property type="entry name" value="RNApol_bact_RpoZ"/>
    <property type="match status" value="1"/>
</dbReference>
<dbReference type="InterPro" id="IPR003716">
    <property type="entry name" value="DNA-dir_RNA_pol_omega"/>
</dbReference>
<dbReference type="InterPro" id="IPR006110">
    <property type="entry name" value="Pol_omega/Rpo6/RPB6"/>
</dbReference>
<dbReference type="InterPro" id="IPR036161">
    <property type="entry name" value="RPB6/omega-like_sf"/>
</dbReference>
<dbReference type="NCBIfam" id="TIGR00690">
    <property type="entry name" value="rpoZ"/>
    <property type="match status" value="1"/>
</dbReference>
<dbReference type="PANTHER" id="PTHR34476">
    <property type="entry name" value="DNA-DIRECTED RNA POLYMERASE SUBUNIT OMEGA"/>
    <property type="match status" value="1"/>
</dbReference>
<dbReference type="PANTHER" id="PTHR34476:SF1">
    <property type="entry name" value="DNA-DIRECTED RNA POLYMERASE SUBUNIT OMEGA"/>
    <property type="match status" value="1"/>
</dbReference>
<dbReference type="Pfam" id="PF01192">
    <property type="entry name" value="RNA_pol_Rpb6"/>
    <property type="match status" value="1"/>
</dbReference>
<dbReference type="SMART" id="SM01409">
    <property type="entry name" value="RNA_pol_Rpb6"/>
    <property type="match status" value="1"/>
</dbReference>
<dbReference type="SUPFAM" id="SSF63562">
    <property type="entry name" value="RPB6/omega subunit-like"/>
    <property type="match status" value="1"/>
</dbReference>
<proteinExistence type="inferred from homology"/>
<protein>
    <recommendedName>
        <fullName evidence="1">DNA-directed RNA polymerase subunit omega</fullName>
        <shortName evidence="1">RNAP omega subunit</shortName>
        <ecNumber evidence="1">2.7.7.6</ecNumber>
    </recommendedName>
    <alternativeName>
        <fullName evidence="1">RNA polymerase omega subunit</fullName>
    </alternativeName>
    <alternativeName>
        <fullName evidence="1">Transcriptase subunit omega</fullName>
    </alternativeName>
</protein>
<reference key="1">
    <citation type="journal article" date="2008" name="PLoS ONE">
        <title>Genome biology of Actinobacillus pleuropneumoniae JL03, an isolate of serotype 3 prevalent in China.</title>
        <authorList>
            <person name="Xu Z."/>
            <person name="Zhou Y."/>
            <person name="Li L."/>
            <person name="Zhou R."/>
            <person name="Xiao S."/>
            <person name="Wan Y."/>
            <person name="Zhang S."/>
            <person name="Wang K."/>
            <person name="Li W."/>
            <person name="Li L."/>
            <person name="Jin H."/>
            <person name="Kang M."/>
            <person name="Dalai B."/>
            <person name="Li T."/>
            <person name="Liu L."/>
            <person name="Cheng Y."/>
            <person name="Zhang L."/>
            <person name="Xu T."/>
            <person name="Zheng H."/>
            <person name="Pu S."/>
            <person name="Wang B."/>
            <person name="Gu W."/>
            <person name="Zhang X.L."/>
            <person name="Zhu G.-F."/>
            <person name="Wang S."/>
            <person name="Zhao G.-P."/>
            <person name="Chen H."/>
        </authorList>
    </citation>
    <scope>NUCLEOTIDE SEQUENCE [LARGE SCALE GENOMIC DNA]</scope>
    <source>
        <strain>JL03</strain>
    </source>
</reference>
<sequence>MARVTVQEAADKIGNRFDLILTAARRARQLQLHVREPLVPEENDKPTVIALREIEKGLINGQIMDQLENNDAIQQEVAEQEAISFLADVQANA</sequence>
<evidence type="ECO:0000255" key="1">
    <source>
        <dbReference type="HAMAP-Rule" id="MF_00366"/>
    </source>
</evidence>